<organism>
    <name type="scientific">Burkholderia mallei (strain ATCC 23344)</name>
    <dbReference type="NCBI Taxonomy" id="243160"/>
    <lineage>
        <taxon>Bacteria</taxon>
        <taxon>Pseudomonadati</taxon>
        <taxon>Pseudomonadota</taxon>
        <taxon>Betaproteobacteria</taxon>
        <taxon>Burkholderiales</taxon>
        <taxon>Burkholderiaceae</taxon>
        <taxon>Burkholderia</taxon>
        <taxon>pseudomallei group</taxon>
    </lineage>
</organism>
<protein>
    <recommendedName>
        <fullName evidence="1">Large ribosomal subunit protein bL32</fullName>
    </recommendedName>
    <alternativeName>
        <fullName evidence="3">50S ribosomal protein L32</fullName>
    </alternativeName>
</protein>
<sequence>MAVQQNKKSPSKRGMHRSHDFLTTSPLAVEPSTGEVHLRHHISPNGYYRGKKVVKTKND</sequence>
<name>RL32_BURMA</name>
<proteinExistence type="inferred from homology"/>
<accession>Q62LU4</accession>
<evidence type="ECO:0000255" key="1">
    <source>
        <dbReference type="HAMAP-Rule" id="MF_00340"/>
    </source>
</evidence>
<evidence type="ECO:0000256" key="2">
    <source>
        <dbReference type="SAM" id="MobiDB-lite"/>
    </source>
</evidence>
<evidence type="ECO:0000305" key="3"/>
<comment type="similarity">
    <text evidence="1">Belongs to the bacterial ribosomal protein bL32 family.</text>
</comment>
<dbReference type="EMBL" id="CP000010">
    <property type="protein sequence ID" value="AAU49392.1"/>
    <property type="molecule type" value="Genomic_DNA"/>
</dbReference>
<dbReference type="RefSeq" id="WP_004192741.1">
    <property type="nucleotide sequence ID" value="NC_006348.1"/>
</dbReference>
<dbReference type="RefSeq" id="YP_102324.1">
    <property type="nucleotide sequence ID" value="NC_006348.1"/>
</dbReference>
<dbReference type="SMR" id="Q62LU4"/>
<dbReference type="GeneID" id="93061024"/>
<dbReference type="KEGG" id="bma:BMA0528"/>
<dbReference type="PATRIC" id="fig|243160.12.peg.542"/>
<dbReference type="eggNOG" id="COG0333">
    <property type="taxonomic scope" value="Bacteria"/>
</dbReference>
<dbReference type="HOGENOM" id="CLU_129084_2_1_4"/>
<dbReference type="Proteomes" id="UP000006693">
    <property type="component" value="Chromosome 1"/>
</dbReference>
<dbReference type="GO" id="GO:0015934">
    <property type="term" value="C:large ribosomal subunit"/>
    <property type="evidence" value="ECO:0007669"/>
    <property type="project" value="InterPro"/>
</dbReference>
<dbReference type="GO" id="GO:0003735">
    <property type="term" value="F:structural constituent of ribosome"/>
    <property type="evidence" value="ECO:0007669"/>
    <property type="project" value="InterPro"/>
</dbReference>
<dbReference type="GO" id="GO:0006412">
    <property type="term" value="P:translation"/>
    <property type="evidence" value="ECO:0007669"/>
    <property type="project" value="UniProtKB-UniRule"/>
</dbReference>
<dbReference type="HAMAP" id="MF_00340">
    <property type="entry name" value="Ribosomal_bL32"/>
    <property type="match status" value="1"/>
</dbReference>
<dbReference type="InterPro" id="IPR002677">
    <property type="entry name" value="Ribosomal_bL32"/>
</dbReference>
<dbReference type="InterPro" id="IPR044957">
    <property type="entry name" value="Ribosomal_bL32_bact"/>
</dbReference>
<dbReference type="InterPro" id="IPR011332">
    <property type="entry name" value="Ribosomal_zn-bd"/>
</dbReference>
<dbReference type="NCBIfam" id="TIGR01031">
    <property type="entry name" value="rpmF_bact"/>
    <property type="match status" value="1"/>
</dbReference>
<dbReference type="PANTHER" id="PTHR35534">
    <property type="entry name" value="50S RIBOSOMAL PROTEIN L32"/>
    <property type="match status" value="1"/>
</dbReference>
<dbReference type="PANTHER" id="PTHR35534:SF1">
    <property type="entry name" value="LARGE RIBOSOMAL SUBUNIT PROTEIN BL32"/>
    <property type="match status" value="1"/>
</dbReference>
<dbReference type="Pfam" id="PF01783">
    <property type="entry name" value="Ribosomal_L32p"/>
    <property type="match status" value="1"/>
</dbReference>
<dbReference type="SUPFAM" id="SSF57829">
    <property type="entry name" value="Zn-binding ribosomal proteins"/>
    <property type="match status" value="1"/>
</dbReference>
<gene>
    <name evidence="1" type="primary">rpmF</name>
    <name type="ordered locus">BMA0528</name>
</gene>
<reference key="1">
    <citation type="journal article" date="2004" name="Proc. Natl. Acad. Sci. U.S.A.">
        <title>Structural flexibility in the Burkholderia mallei genome.</title>
        <authorList>
            <person name="Nierman W.C."/>
            <person name="DeShazer D."/>
            <person name="Kim H.S."/>
            <person name="Tettelin H."/>
            <person name="Nelson K.E."/>
            <person name="Feldblyum T.V."/>
            <person name="Ulrich R.L."/>
            <person name="Ronning C.M."/>
            <person name="Brinkac L.M."/>
            <person name="Daugherty S.C."/>
            <person name="Davidsen T.D."/>
            <person name="DeBoy R.T."/>
            <person name="Dimitrov G."/>
            <person name="Dodson R.J."/>
            <person name="Durkin A.S."/>
            <person name="Gwinn M.L."/>
            <person name="Haft D.H."/>
            <person name="Khouri H.M."/>
            <person name="Kolonay J.F."/>
            <person name="Madupu R."/>
            <person name="Mohammoud Y."/>
            <person name="Nelson W.C."/>
            <person name="Radune D."/>
            <person name="Romero C.M."/>
            <person name="Sarria S."/>
            <person name="Selengut J."/>
            <person name="Shamblin C."/>
            <person name="Sullivan S.A."/>
            <person name="White O."/>
            <person name="Yu Y."/>
            <person name="Zafar N."/>
            <person name="Zhou L."/>
            <person name="Fraser C.M."/>
        </authorList>
    </citation>
    <scope>NUCLEOTIDE SEQUENCE [LARGE SCALE GENOMIC DNA]</scope>
    <source>
        <strain>ATCC 23344</strain>
    </source>
</reference>
<feature type="chain" id="PRO_0000225708" description="Large ribosomal subunit protein bL32">
    <location>
        <begin position="1"/>
        <end position="59"/>
    </location>
</feature>
<feature type="region of interest" description="Disordered" evidence="2">
    <location>
        <begin position="1"/>
        <end position="59"/>
    </location>
</feature>
<feature type="compositionally biased region" description="Basic residues" evidence="2">
    <location>
        <begin position="49"/>
        <end position="59"/>
    </location>
</feature>
<keyword id="KW-1185">Reference proteome</keyword>
<keyword id="KW-0687">Ribonucleoprotein</keyword>
<keyword id="KW-0689">Ribosomal protein</keyword>